<reference key="1">
    <citation type="submission" date="1993-06" db="EMBL/GenBank/DDBJ databases">
        <title>DNA sequence of the genes of the large subunits of the DNA dependent RNA-polymerase of Methanococcus vannielii.</title>
        <authorList>
            <person name="Palm P."/>
            <person name="Arnold-Ammer I."/>
            <person name="Lechner K.A."/>
            <person name="Zillig W."/>
        </authorList>
    </citation>
    <scope>NUCLEOTIDE SEQUENCE [GENOMIC DNA]</scope>
</reference>
<reference key="2">
    <citation type="submission" date="2007-06" db="EMBL/GenBank/DDBJ databases">
        <title>Complete sequence of Methanococcus vannielii SB.</title>
        <authorList>
            <consortium name="US DOE Joint Genome Institute"/>
            <person name="Copeland A."/>
            <person name="Lucas S."/>
            <person name="Lapidus A."/>
            <person name="Barry K."/>
            <person name="Glavina del Rio T."/>
            <person name="Dalin E."/>
            <person name="Tice H."/>
            <person name="Pitluck S."/>
            <person name="Chain P."/>
            <person name="Malfatti S."/>
            <person name="Shin M."/>
            <person name="Vergez L."/>
            <person name="Schmutz J."/>
            <person name="Larimer F."/>
            <person name="Land M."/>
            <person name="Hauser L."/>
            <person name="Kyrpides N."/>
            <person name="Anderson I."/>
            <person name="Sieprawska-Lupa M."/>
            <person name="Whitman W.B."/>
            <person name="Richardson P."/>
        </authorList>
    </citation>
    <scope>NUCLEOTIDE SEQUENCE [LARGE SCALE GENOMIC DNA]</scope>
    <source>
        <strain>ATCC 35089 / DSM 1224 / JCM 13029 / OCM 148 / SB</strain>
    </source>
</reference>
<keyword id="KW-0963">Cytoplasm</keyword>
<keyword id="KW-0238">DNA-binding</keyword>
<keyword id="KW-0240">DNA-directed RNA polymerase</keyword>
<keyword id="KW-0479">Metal-binding</keyword>
<keyword id="KW-0548">Nucleotidyltransferase</keyword>
<keyword id="KW-0804">Transcription</keyword>
<keyword id="KW-0808">Transferase</keyword>
<keyword id="KW-0862">Zinc</keyword>
<comment type="function">
    <text evidence="1">DNA-dependent RNA polymerase (RNAP) catalyzes the transcription of DNA into RNA using the four ribonucleoside triphosphates as substrates. The Rpo2 subunit (Rpo2N and Rpo2C in this organism) is implicated in DNA promoter recognition and in nucleotide binding.</text>
</comment>
<comment type="catalytic activity">
    <reaction evidence="2">
        <text>RNA(n) + a ribonucleoside 5'-triphosphate = RNA(n+1) + diphosphate</text>
        <dbReference type="Rhea" id="RHEA:21248"/>
        <dbReference type="Rhea" id="RHEA-COMP:14527"/>
        <dbReference type="Rhea" id="RHEA-COMP:17342"/>
        <dbReference type="ChEBI" id="CHEBI:33019"/>
        <dbReference type="ChEBI" id="CHEBI:61557"/>
        <dbReference type="ChEBI" id="CHEBI:140395"/>
        <dbReference type="EC" id="2.7.7.6"/>
    </reaction>
</comment>
<comment type="cofactor">
    <cofactor evidence="1">
        <name>Zn(2+)</name>
        <dbReference type="ChEBI" id="CHEBI:29105"/>
    </cofactor>
    <text evidence="1">Binds 1 Zn(2+) per subunit.</text>
</comment>
<comment type="subunit">
    <text evidence="1">Part of the RNA polymerase complex.</text>
</comment>
<comment type="subcellular location">
    <subcellularLocation>
        <location evidence="1">Cytoplasm</location>
    </subcellularLocation>
</comment>
<comment type="similarity">
    <text evidence="4">Belongs to the RNA polymerase beta chain family.</text>
</comment>
<comment type="sequence caution" evidence="4">
    <conflict type="erroneous initiation">
        <sequence resource="EMBL-CDS" id="CAA51727"/>
    </conflict>
    <text>Truncated N-terminus.</text>
</comment>
<name>RPO2C_METVS</name>
<proteinExistence type="inferred from homology"/>
<dbReference type="EC" id="2.7.7.6" evidence="2"/>
<dbReference type="EMBL" id="X73293">
    <property type="protein sequence ID" value="CAA51727.1"/>
    <property type="status" value="ALT_INIT"/>
    <property type="molecule type" value="Genomic_DNA"/>
</dbReference>
<dbReference type="EMBL" id="CP000742">
    <property type="protein sequence ID" value="ABR54578.1"/>
    <property type="molecule type" value="Genomic_DNA"/>
</dbReference>
<dbReference type="PIR" id="S47161">
    <property type="entry name" value="S47161"/>
</dbReference>
<dbReference type="RefSeq" id="WP_011972480.1">
    <property type="nucleotide sequence ID" value="NC_009634.1"/>
</dbReference>
<dbReference type="SMR" id="P41557"/>
<dbReference type="STRING" id="406327.Mevan_0672"/>
<dbReference type="GeneID" id="5325059"/>
<dbReference type="KEGG" id="mvn:Mevan_0672"/>
<dbReference type="eggNOG" id="arCOG01762">
    <property type="taxonomic scope" value="Archaea"/>
</dbReference>
<dbReference type="HOGENOM" id="CLU_000524_2_2_2"/>
<dbReference type="OrthoDB" id="6009at2157"/>
<dbReference type="Proteomes" id="UP000001107">
    <property type="component" value="Chromosome"/>
</dbReference>
<dbReference type="GO" id="GO:0005737">
    <property type="term" value="C:cytoplasm"/>
    <property type="evidence" value="ECO:0007669"/>
    <property type="project" value="UniProtKB-SubCell"/>
</dbReference>
<dbReference type="GO" id="GO:0000428">
    <property type="term" value="C:DNA-directed RNA polymerase complex"/>
    <property type="evidence" value="ECO:0007669"/>
    <property type="project" value="UniProtKB-KW"/>
</dbReference>
<dbReference type="GO" id="GO:0003677">
    <property type="term" value="F:DNA binding"/>
    <property type="evidence" value="ECO:0007669"/>
    <property type="project" value="UniProtKB-KW"/>
</dbReference>
<dbReference type="GO" id="GO:0003899">
    <property type="term" value="F:DNA-directed RNA polymerase activity"/>
    <property type="evidence" value="ECO:0007669"/>
    <property type="project" value="UniProtKB-EC"/>
</dbReference>
<dbReference type="GO" id="GO:0032549">
    <property type="term" value="F:ribonucleoside binding"/>
    <property type="evidence" value="ECO:0007669"/>
    <property type="project" value="InterPro"/>
</dbReference>
<dbReference type="GO" id="GO:0008270">
    <property type="term" value="F:zinc ion binding"/>
    <property type="evidence" value="ECO:0007669"/>
    <property type="project" value="InterPro"/>
</dbReference>
<dbReference type="GO" id="GO:0006351">
    <property type="term" value="P:DNA-templated transcription"/>
    <property type="evidence" value="ECO:0007669"/>
    <property type="project" value="InterPro"/>
</dbReference>
<dbReference type="CDD" id="cd00653">
    <property type="entry name" value="RNA_pol_B_RPB2"/>
    <property type="match status" value="1"/>
</dbReference>
<dbReference type="Gene3D" id="2.40.50.150">
    <property type="match status" value="1"/>
</dbReference>
<dbReference type="Gene3D" id="3.90.1070.20">
    <property type="match status" value="1"/>
</dbReference>
<dbReference type="Gene3D" id="2.40.270.10">
    <property type="entry name" value="DNA-directed RNA polymerase, subunit 2, domain 6"/>
    <property type="match status" value="1"/>
</dbReference>
<dbReference type="Gene3D" id="3.90.1800.10">
    <property type="entry name" value="RNA polymerase alpha subunit dimerisation domain"/>
    <property type="match status" value="1"/>
</dbReference>
<dbReference type="InterPro" id="IPR015712">
    <property type="entry name" value="DNA-dir_RNA_pol_su2"/>
</dbReference>
<dbReference type="InterPro" id="IPR007120">
    <property type="entry name" value="DNA-dir_RNAP_su2_dom"/>
</dbReference>
<dbReference type="InterPro" id="IPR037033">
    <property type="entry name" value="DNA-dir_RNAP_su2_hyb_sf"/>
</dbReference>
<dbReference type="InterPro" id="IPR007121">
    <property type="entry name" value="RNA_pol_bsu_CS"/>
</dbReference>
<dbReference type="InterPro" id="IPR007646">
    <property type="entry name" value="RNA_pol_Rpb2_4"/>
</dbReference>
<dbReference type="InterPro" id="IPR007647">
    <property type="entry name" value="RNA_pol_Rpb2_5"/>
</dbReference>
<dbReference type="InterPro" id="IPR007641">
    <property type="entry name" value="RNA_pol_Rpb2_7"/>
</dbReference>
<dbReference type="InterPro" id="IPR014724">
    <property type="entry name" value="RNA_pol_RPB2_OB-fold"/>
</dbReference>
<dbReference type="InterPro" id="IPR019969">
    <property type="entry name" value="RNAP_Rpo2"/>
</dbReference>
<dbReference type="NCBIfam" id="TIGR03670">
    <property type="entry name" value="rpoB_arch"/>
    <property type="match status" value="1"/>
</dbReference>
<dbReference type="PANTHER" id="PTHR20856">
    <property type="entry name" value="DNA-DIRECTED RNA POLYMERASE I SUBUNIT 2"/>
    <property type="match status" value="1"/>
</dbReference>
<dbReference type="Pfam" id="PF04566">
    <property type="entry name" value="RNA_pol_Rpb2_4"/>
    <property type="match status" value="1"/>
</dbReference>
<dbReference type="Pfam" id="PF04567">
    <property type="entry name" value="RNA_pol_Rpb2_5"/>
    <property type="match status" value="1"/>
</dbReference>
<dbReference type="Pfam" id="PF00562">
    <property type="entry name" value="RNA_pol_Rpb2_6"/>
    <property type="match status" value="1"/>
</dbReference>
<dbReference type="Pfam" id="PF04560">
    <property type="entry name" value="RNA_pol_Rpb2_7"/>
    <property type="match status" value="1"/>
</dbReference>
<dbReference type="SUPFAM" id="SSF64484">
    <property type="entry name" value="beta and beta-prime subunits of DNA dependent RNA-polymerase"/>
    <property type="match status" value="1"/>
</dbReference>
<dbReference type="PROSITE" id="PS01166">
    <property type="entry name" value="RNA_POL_BETA"/>
    <property type="match status" value="1"/>
</dbReference>
<protein>
    <recommendedName>
        <fullName evidence="4">DNA-directed RNA polymerase subunit Rpo2C</fullName>
        <ecNumber evidence="2">2.7.7.6</ecNumber>
    </recommendedName>
    <alternativeName>
        <fullName evidence="3">DNA-directed RNA polymerase subunit B'</fullName>
    </alternativeName>
</protein>
<sequence length="611" mass="68481">MEKQANVYVNGKLIDTSKDPENLVKSLRIQRRSGKLSPNTSISFNEESNDIHISTDGGRAVRPLVVVENGFSKLTNELLEKVNNNELTFEYLVKTGVIEFLDAEEEENARIAMYNDEITFENTHVEIDPLVILGIGAGVAPYPEHNSAPRITMAAAMGKQSLGIPMANIKWRMDTRGHLLHYPQVPLVRTKHQEILGFDKRPAGQNFVVAVMSYEGYNMEDAFVINKASLERGLGRSTFFRSYESFEKRYPGGQLDKFEVPEKGVRGYRAEEAYRNLGDDGLIDLESEVRSGDVILGKTSPPRFLEEQEITLQTKSQRRDTSVTIRHGEEGVVDLVILSETKEGNRLGKVRVRDLRVPEFGDKFASRHGQKGVIGLVVPQEDLPFTEDGVIPDLIINPHAIPSRMTIGQVLEMIGGKVGSLECRRVDGTIFSGEGEWALRHALENYGFTHSGKETMYDGKTGRKLECEIFVGVAYYQKLHHLVAGKIHARSRGPIQVLTRQPTEGRAREGGLRFGEMERDVLVAHGAALLLKERLLDESDPHEDYVCAKCGEIAIFDYKRGMKFCPVCGESEDIQDNRKIPPVKIAYAFKLLLDELKSMGIDPKLKLKDRA</sequence>
<organism>
    <name type="scientific">Methanococcus vannielii (strain ATCC 35089 / DSM 1224 / JCM 13029 / OCM 148 / SB)</name>
    <dbReference type="NCBI Taxonomy" id="406327"/>
    <lineage>
        <taxon>Archaea</taxon>
        <taxon>Methanobacteriati</taxon>
        <taxon>Methanobacteriota</taxon>
        <taxon>Methanomada group</taxon>
        <taxon>Methanococci</taxon>
        <taxon>Methanococcales</taxon>
        <taxon>Methanococcaceae</taxon>
        <taxon>Methanococcus</taxon>
    </lineage>
</organism>
<evidence type="ECO:0000250" key="1">
    <source>
        <dbReference type="UniProtKB" id="B8YB55"/>
    </source>
</evidence>
<evidence type="ECO:0000250" key="2">
    <source>
        <dbReference type="UniProtKB" id="P11513"/>
    </source>
</evidence>
<evidence type="ECO:0000303" key="3">
    <source ref="1"/>
</evidence>
<evidence type="ECO:0000305" key="4"/>
<accession>P41557</accession>
<accession>A6UQ06</accession>
<gene>
    <name evidence="4" type="primary">rpo2C</name>
    <name evidence="3" type="synonym">rpoB</name>
    <name type="synonym">rpoB1</name>
    <name type="ordered locus">Mevan_0672</name>
</gene>
<feature type="chain" id="PRO_0000048105" description="DNA-directed RNA polymerase subunit Rpo2C">
    <location>
        <begin position="1"/>
        <end position="611"/>
    </location>
</feature>
<feature type="binding site" evidence="1">
    <location>
        <position position="547"/>
    </location>
    <ligand>
        <name>Zn(2+)</name>
        <dbReference type="ChEBI" id="CHEBI:29105"/>
    </ligand>
</feature>
<feature type="binding site" evidence="1">
    <location>
        <position position="550"/>
    </location>
    <ligand>
        <name>Zn(2+)</name>
        <dbReference type="ChEBI" id="CHEBI:29105"/>
    </ligand>
</feature>
<feature type="binding site" evidence="1">
    <location>
        <position position="565"/>
    </location>
    <ligand>
        <name>Zn(2+)</name>
        <dbReference type="ChEBI" id="CHEBI:29105"/>
    </ligand>
</feature>
<feature type="binding site" evidence="4">
    <location>
        <position position="568"/>
    </location>
    <ligand>
        <name>Zn(2+)</name>
        <dbReference type="ChEBI" id="CHEBI:29105"/>
    </ligand>
</feature>